<accession>P0CO56</accession>
<accession>Q55YC2</accession>
<accession>Q5KLL9</accession>
<comment type="function">
    <text evidence="1">Methylates the carboxyl group of the C-terminal leucine residue of protein phosphatase 2A catalytic subunits to form alpha-leucine ester residues.</text>
</comment>
<comment type="catalytic activity">
    <reaction>
        <text>[phosphatase 2A protein]-C-terminal L-leucine + S-adenosyl-L-methionine = [phosphatase 2A protein]-C-terminal L-leucine methyl ester + S-adenosyl-L-homocysteine</text>
        <dbReference type="Rhea" id="RHEA:48544"/>
        <dbReference type="Rhea" id="RHEA-COMP:12134"/>
        <dbReference type="Rhea" id="RHEA-COMP:12135"/>
        <dbReference type="ChEBI" id="CHEBI:57856"/>
        <dbReference type="ChEBI" id="CHEBI:59789"/>
        <dbReference type="ChEBI" id="CHEBI:90516"/>
        <dbReference type="ChEBI" id="CHEBI:90517"/>
        <dbReference type="EC" id="2.1.1.233"/>
    </reaction>
</comment>
<comment type="similarity">
    <text evidence="2">Belongs to the methyltransferase superfamily. LCMT family.</text>
</comment>
<keyword id="KW-0489">Methyltransferase</keyword>
<keyword id="KW-1185">Reference proteome</keyword>
<keyword id="KW-0949">S-adenosyl-L-methionine</keyword>
<keyword id="KW-0808">Transferase</keyword>
<gene>
    <name type="primary">PPM1</name>
    <name type="ordered locus">CNB04800</name>
</gene>
<sequence length="356" mass="39426">MLPPRTDPPPAQHSDDAVRLTDDDAASARLSAAQLGYLQDPFASLLYRPPMPQPGAFAPQAVGRARKPPLINVGTHHRTWGIDRLVDRFLQRGGKQVVSLGAGSDTRFWRLMSRATPPDLARYVEIDFPHLTSPKAQRIARHRKLYQYLGPSSTAMPPPGHPYTVSKGGTQLSSPLYTLLPLDLRPSPSEPASSISAILSHHVLPQLDPRLPTLFLAECLFPYMSPEDSREIIKWFGETFCSCMGVVYEMVGLDDSFGNVMKRNLAVRNLSIPGSIFSTPESQAGRFTSPMLQGGKFDSAGAKTLWQIREEDVGPEELQRISKLEILDEIEELRLVLEHYVIAWGTKGECMSSISL</sequence>
<evidence type="ECO:0000250" key="1"/>
<evidence type="ECO:0000305" key="2"/>
<feature type="chain" id="PRO_0000226126" description="Leucine carboxyl methyltransferase 1">
    <location>
        <begin position="1"/>
        <end position="356"/>
    </location>
</feature>
<feature type="binding site" evidence="1">
    <location>
        <position position="78"/>
    </location>
    <ligand>
        <name>S-adenosyl-L-methionine</name>
        <dbReference type="ChEBI" id="CHEBI:59789"/>
    </ligand>
</feature>
<feature type="binding site" evidence="1">
    <location>
        <position position="101"/>
    </location>
    <ligand>
        <name>S-adenosyl-L-methionine</name>
        <dbReference type="ChEBI" id="CHEBI:59789"/>
    </ligand>
</feature>
<feature type="binding site" evidence="1">
    <location>
        <position position="127"/>
    </location>
    <ligand>
        <name>S-adenosyl-L-methionine</name>
        <dbReference type="ChEBI" id="CHEBI:59789"/>
    </ligand>
</feature>
<feature type="binding site" evidence="1">
    <location>
        <begin position="183"/>
        <end position="184"/>
    </location>
    <ligand>
        <name>S-adenosyl-L-methionine</name>
        <dbReference type="ChEBI" id="CHEBI:59789"/>
    </ligand>
</feature>
<feature type="binding site" evidence="1">
    <location>
        <position position="218"/>
    </location>
    <ligand>
        <name>S-adenosyl-L-methionine</name>
        <dbReference type="ChEBI" id="CHEBI:59789"/>
    </ligand>
</feature>
<name>LCMT1_CRYNJ</name>
<dbReference type="EC" id="2.1.1.233"/>
<dbReference type="EMBL" id="AE017342">
    <property type="protein sequence ID" value="AAW41663.2"/>
    <property type="molecule type" value="Genomic_DNA"/>
</dbReference>
<dbReference type="RefSeq" id="XP_568970.1">
    <property type="nucleotide sequence ID" value="XM_568970.1"/>
</dbReference>
<dbReference type="SMR" id="P0CO56"/>
<dbReference type="FunCoup" id="P0CO56">
    <property type="interactions" value="318"/>
</dbReference>
<dbReference type="STRING" id="214684.P0CO56"/>
<dbReference type="PaxDb" id="214684-P0CO56"/>
<dbReference type="EnsemblFungi" id="AAW41663">
    <property type="protein sequence ID" value="AAW41663"/>
    <property type="gene ID" value="CNB04800"/>
</dbReference>
<dbReference type="eggNOG" id="KOG2918">
    <property type="taxonomic scope" value="Eukaryota"/>
</dbReference>
<dbReference type="HOGENOM" id="CLU_031312_1_0_1"/>
<dbReference type="InParanoid" id="P0CO56"/>
<dbReference type="Proteomes" id="UP000002149">
    <property type="component" value="Chromosome 2"/>
</dbReference>
<dbReference type="GO" id="GO:0018423">
    <property type="term" value="F:protein C-terminal leucine carboxyl O-methyltransferase activity"/>
    <property type="evidence" value="ECO:0000318"/>
    <property type="project" value="GO_Central"/>
</dbReference>
<dbReference type="GO" id="GO:0032259">
    <property type="term" value="P:methylation"/>
    <property type="evidence" value="ECO:0007669"/>
    <property type="project" value="UniProtKB-KW"/>
</dbReference>
<dbReference type="Gene3D" id="3.40.50.150">
    <property type="entry name" value="Vaccinia Virus protein VP39"/>
    <property type="match status" value="1"/>
</dbReference>
<dbReference type="InterPro" id="IPR016651">
    <property type="entry name" value="LCMT1"/>
</dbReference>
<dbReference type="InterPro" id="IPR007213">
    <property type="entry name" value="Ppm1/Ppm2/Tcmp"/>
</dbReference>
<dbReference type="InterPro" id="IPR029063">
    <property type="entry name" value="SAM-dependent_MTases_sf"/>
</dbReference>
<dbReference type="PANTHER" id="PTHR13600">
    <property type="entry name" value="LEUCINE CARBOXYL METHYLTRANSFERASE"/>
    <property type="match status" value="1"/>
</dbReference>
<dbReference type="PANTHER" id="PTHR13600:SF21">
    <property type="entry name" value="LEUCINE CARBOXYL METHYLTRANSFERASE 1"/>
    <property type="match status" value="1"/>
</dbReference>
<dbReference type="Pfam" id="PF04072">
    <property type="entry name" value="LCM"/>
    <property type="match status" value="1"/>
</dbReference>
<dbReference type="PIRSF" id="PIRSF016305">
    <property type="entry name" value="LCM_mtfrase"/>
    <property type="match status" value="1"/>
</dbReference>
<dbReference type="SUPFAM" id="SSF53335">
    <property type="entry name" value="S-adenosyl-L-methionine-dependent methyltransferases"/>
    <property type="match status" value="1"/>
</dbReference>
<organism>
    <name type="scientific">Cryptococcus neoformans var. neoformans serotype D (strain JEC21 / ATCC MYA-565)</name>
    <name type="common">Filobasidiella neoformans</name>
    <dbReference type="NCBI Taxonomy" id="214684"/>
    <lineage>
        <taxon>Eukaryota</taxon>
        <taxon>Fungi</taxon>
        <taxon>Dikarya</taxon>
        <taxon>Basidiomycota</taxon>
        <taxon>Agaricomycotina</taxon>
        <taxon>Tremellomycetes</taxon>
        <taxon>Tremellales</taxon>
        <taxon>Cryptococcaceae</taxon>
        <taxon>Cryptococcus</taxon>
        <taxon>Cryptococcus neoformans species complex</taxon>
    </lineage>
</organism>
<proteinExistence type="inferred from homology"/>
<protein>
    <recommendedName>
        <fullName>Leucine carboxyl methyltransferase 1</fullName>
        <ecNumber>2.1.1.233</ecNumber>
    </recommendedName>
    <alternativeName>
        <fullName>Protein phosphatase methyltransferase 1</fullName>
    </alternativeName>
    <alternativeName>
        <fullName>[Phosphatase 2A protein]-leucine-carboxy methyltransferase 1</fullName>
    </alternativeName>
</protein>
<reference key="1">
    <citation type="journal article" date="2005" name="Science">
        <title>The genome of the basidiomycetous yeast and human pathogen Cryptococcus neoformans.</title>
        <authorList>
            <person name="Loftus B.J."/>
            <person name="Fung E."/>
            <person name="Roncaglia P."/>
            <person name="Rowley D."/>
            <person name="Amedeo P."/>
            <person name="Bruno D."/>
            <person name="Vamathevan J."/>
            <person name="Miranda M."/>
            <person name="Anderson I.J."/>
            <person name="Fraser J.A."/>
            <person name="Allen J.E."/>
            <person name="Bosdet I.E."/>
            <person name="Brent M.R."/>
            <person name="Chiu R."/>
            <person name="Doering T.L."/>
            <person name="Donlin M.J."/>
            <person name="D'Souza C.A."/>
            <person name="Fox D.S."/>
            <person name="Grinberg V."/>
            <person name="Fu J."/>
            <person name="Fukushima M."/>
            <person name="Haas B.J."/>
            <person name="Huang J.C."/>
            <person name="Janbon G."/>
            <person name="Jones S.J.M."/>
            <person name="Koo H.L."/>
            <person name="Krzywinski M.I."/>
            <person name="Kwon-Chung K.J."/>
            <person name="Lengeler K.B."/>
            <person name="Maiti R."/>
            <person name="Marra M.A."/>
            <person name="Marra R.E."/>
            <person name="Mathewson C.A."/>
            <person name="Mitchell T.G."/>
            <person name="Pertea M."/>
            <person name="Riggs F.R."/>
            <person name="Salzberg S.L."/>
            <person name="Schein J.E."/>
            <person name="Shvartsbeyn A."/>
            <person name="Shin H."/>
            <person name="Shumway M."/>
            <person name="Specht C.A."/>
            <person name="Suh B.B."/>
            <person name="Tenney A."/>
            <person name="Utterback T.R."/>
            <person name="Wickes B.L."/>
            <person name="Wortman J.R."/>
            <person name="Wye N.H."/>
            <person name="Kronstad J.W."/>
            <person name="Lodge J.K."/>
            <person name="Heitman J."/>
            <person name="Davis R.W."/>
            <person name="Fraser C.M."/>
            <person name="Hyman R.W."/>
        </authorList>
    </citation>
    <scope>NUCLEOTIDE SEQUENCE [LARGE SCALE GENOMIC DNA]</scope>
    <source>
        <strain>JEC21 / ATCC MYA-565</strain>
    </source>
</reference>